<organism>
    <name type="scientific">Sparus aurata</name>
    <name type="common">Gilthead sea bream</name>
    <dbReference type="NCBI Taxonomy" id="8175"/>
    <lineage>
        <taxon>Eukaryota</taxon>
        <taxon>Metazoa</taxon>
        <taxon>Chordata</taxon>
        <taxon>Craniata</taxon>
        <taxon>Vertebrata</taxon>
        <taxon>Euteleostomi</taxon>
        <taxon>Actinopterygii</taxon>
        <taxon>Neopterygii</taxon>
        <taxon>Teleostei</taxon>
        <taxon>Neoteleostei</taxon>
        <taxon>Acanthomorphata</taxon>
        <taxon>Eupercaria</taxon>
        <taxon>Spariformes</taxon>
        <taxon>Sparidae</taxon>
        <taxon>Sparus</taxon>
    </lineage>
</organism>
<evidence type="ECO:0000250" key="1">
    <source>
        <dbReference type="UniProtKB" id="P51919"/>
    </source>
</evidence>
<evidence type="ECO:0000255" key="2"/>
<evidence type="ECO:0000305" key="3"/>
<dbReference type="EMBL" id="U30311">
    <property type="protein sequence ID" value="AAA98845.1"/>
    <property type="molecule type" value="mRNA"/>
</dbReference>
<dbReference type="FunCoup" id="P51923">
    <property type="interactions" value="129"/>
</dbReference>
<dbReference type="InParanoid" id="P51923"/>
<dbReference type="OrthoDB" id="8929129at2759"/>
<dbReference type="Proteomes" id="UP000472265">
    <property type="component" value="Unplaced"/>
</dbReference>
<dbReference type="GO" id="GO:0005615">
    <property type="term" value="C:extracellular space"/>
    <property type="evidence" value="ECO:0000250"/>
    <property type="project" value="UniProtKB"/>
</dbReference>
<dbReference type="GO" id="GO:0005183">
    <property type="term" value="F:gonadotropin hormone-releasing hormone activity"/>
    <property type="evidence" value="ECO:0007669"/>
    <property type="project" value="TreeGrafter"/>
</dbReference>
<dbReference type="GO" id="GO:0031530">
    <property type="term" value="F:gonadotropin-releasing hormone receptor binding"/>
    <property type="evidence" value="ECO:0007669"/>
    <property type="project" value="TreeGrafter"/>
</dbReference>
<dbReference type="InterPro" id="IPR002012">
    <property type="entry name" value="GnRH"/>
</dbReference>
<dbReference type="InterPro" id="IPR019792">
    <property type="entry name" value="Gonadoliberin"/>
</dbReference>
<dbReference type="PANTHER" id="PTHR10522">
    <property type="entry name" value="GONADOLIBERIN"/>
    <property type="match status" value="1"/>
</dbReference>
<dbReference type="PANTHER" id="PTHR10522:SF6">
    <property type="entry name" value="PROGONADOLIBERIN-2"/>
    <property type="match status" value="1"/>
</dbReference>
<dbReference type="Pfam" id="PF00446">
    <property type="entry name" value="GnRH"/>
    <property type="match status" value="1"/>
</dbReference>
<dbReference type="PROSITE" id="PS00473">
    <property type="entry name" value="GNRH"/>
    <property type="match status" value="1"/>
</dbReference>
<protein>
    <recommendedName>
        <fullName>Progonadoliberin-3</fullName>
    </recommendedName>
    <alternativeName>
        <fullName>Progonadoliberin III</fullName>
    </alternativeName>
    <component>
        <recommendedName>
            <fullName>Gonadoliberin-3</fullName>
        </recommendedName>
        <alternativeName>
            <fullName>Gonadoliberin III</fullName>
        </alternativeName>
        <alternativeName>
            <fullName>Gonadotropin-releasing hormone III</fullName>
            <shortName>GnRH III</shortName>
        </alternativeName>
        <alternativeName>
            <fullName>Luliberin III</fullName>
        </alternativeName>
        <alternativeName>
            <fullName>Luteinizing hormone-releasing hormone III</fullName>
            <shortName>LH-RH III</shortName>
        </alternativeName>
    </component>
    <component>
        <recommendedName>
            <fullName>GnRH-associated peptide 3</fullName>
        </recommendedName>
        <alternativeName>
            <fullName>GnRH-associated peptide III</fullName>
        </alternativeName>
    </component>
</protein>
<keyword id="KW-0027">Amidation</keyword>
<keyword id="KW-0165">Cleavage on pair of basic residues</keyword>
<keyword id="KW-0372">Hormone</keyword>
<keyword id="KW-0873">Pyrrolidone carboxylic acid</keyword>
<keyword id="KW-1185">Reference proteome</keyword>
<keyword id="KW-0964">Secreted</keyword>
<keyword id="KW-0732">Signal</keyword>
<gene>
    <name type="primary">gnrh3</name>
</gene>
<feature type="signal peptide" evidence="1">
    <location>
        <begin position="1"/>
        <end position="23"/>
    </location>
</feature>
<feature type="chain" id="PRO_0000012541" description="Progonadoliberin-3">
    <location>
        <begin position="24"/>
        <end position="90"/>
    </location>
</feature>
<feature type="peptide" id="PRO_0000012542" description="Gonadoliberin-3">
    <location>
        <begin position="24"/>
        <end position="33"/>
    </location>
</feature>
<feature type="peptide" id="PRO_0000012543" description="GnRH-associated peptide 3" evidence="2">
    <location>
        <begin position="37"/>
        <end position="82"/>
    </location>
</feature>
<feature type="modified residue" description="Pyrrolidone carboxylic acid" evidence="1">
    <location>
        <position position="24"/>
    </location>
</feature>
<feature type="modified residue" description="Glycine amide" evidence="1">
    <location>
        <position position="33"/>
    </location>
</feature>
<name>GON3_SPAAU</name>
<proteinExistence type="inferred from homology"/>
<accession>P51923</accession>
<comment type="function">
    <text>Stimulates the secretion of gonadotropins.</text>
</comment>
<comment type="subcellular location">
    <subcellularLocation>
        <location>Secreted</location>
    </subcellularLocation>
</comment>
<comment type="similarity">
    <text evidence="3">Belongs to the GnRH family.</text>
</comment>
<sequence length="90" mass="10031">MEASSRVTVQVLLLALVVQVTLSQHWSYGWLPGGKRSVGELEATIRMMGTGGVVSLPEEASAQTQERLRPYNVIKDDSSPFDRKKRFPNK</sequence>
<reference key="1">
    <citation type="journal article" date="1998" name="Gen. Comp. Endocrinol.">
        <title>Levels of the native forms of GnRH in the pituitary of the gilthead seabream, Sparus aurata, at several characteristic stages of the gonadal cycle.</title>
        <authorList>
            <person name="Holland M.C.H."/>
            <person name="Gothilf Y."/>
            <person name="Meiri I."/>
            <person name="King J.A."/>
            <person name="Okuzawa K."/>
            <person name="Elizur A."/>
            <person name="Zohar Y."/>
        </authorList>
    </citation>
    <scope>NUCLEOTIDE SEQUENCE [MRNA]</scope>
    <source>
        <tissue>Brain</tissue>
    </source>
</reference>